<organism>
    <name type="scientific">Desulfosudis oleivorans (strain DSM 6200 / JCM 39069 / Hxd3)</name>
    <name type="common">Desulfococcus oleovorans</name>
    <dbReference type="NCBI Taxonomy" id="96561"/>
    <lineage>
        <taxon>Bacteria</taxon>
        <taxon>Pseudomonadati</taxon>
        <taxon>Thermodesulfobacteriota</taxon>
        <taxon>Desulfobacteria</taxon>
        <taxon>Desulfobacterales</taxon>
        <taxon>Desulfosudaceae</taxon>
        <taxon>Desulfosudis</taxon>
    </lineage>
</organism>
<protein>
    <recommendedName>
        <fullName evidence="1">Trigger factor</fullName>
        <shortName evidence="1">TF</shortName>
        <ecNumber evidence="1">5.2.1.8</ecNumber>
    </recommendedName>
    <alternativeName>
        <fullName evidence="1">PPIase</fullName>
    </alternativeName>
</protein>
<sequence length="443" mass="49651">MHVTVEDQSTIKKVLHVEIPVEVVSRELNAGFDQIRKTAKIKGFRPGKAPMSMLKRLYKDQVHADVSIQLIQSSLPNAIREKALNIIGDPQINPSVLSEEGPFTYSATIEIKPEIDDIDFKGLTLKKPLYACTDEEVDHQLTLLRKNLAKLQDIAEPRPAQEKDAAIIDYQARLDGQPVADLPDEQEFHLRIGSGAIDKTFDQQVVGMTVGETRTFEVTFPETHGSKTLAGNTISFTVTLKSLKEEILPELNDELAAQFGPFDSLDQLKTEIRKNLQSGYDRRGEQELHEQVFTALLEKTSFEVPETMVQHELDGILDEIDRTYSAYNLSLEALGQTKEALSEKYRDTAVKQAKRHLILNKIIDQEKMAISDDELAEGFESIAKSMGQPADMVKQYYQGNPEQIDVLRYTLLEKKAMRIIIEGSTVEEVTPDPSSPDTAGDQA</sequence>
<feature type="chain" id="PRO_1000115529" description="Trigger factor">
    <location>
        <begin position="1"/>
        <end position="443"/>
    </location>
</feature>
<feature type="domain" description="PPIase FKBP-type" evidence="1">
    <location>
        <begin position="163"/>
        <end position="249"/>
    </location>
</feature>
<dbReference type="EC" id="5.2.1.8" evidence="1"/>
<dbReference type="EMBL" id="CP000859">
    <property type="protein sequence ID" value="ABW68495.1"/>
    <property type="molecule type" value="Genomic_DNA"/>
</dbReference>
<dbReference type="RefSeq" id="WP_012176106.1">
    <property type="nucleotide sequence ID" value="NC_009943.1"/>
</dbReference>
<dbReference type="SMR" id="A8ZXB6"/>
<dbReference type="STRING" id="96561.Dole_2692"/>
<dbReference type="KEGG" id="dol:Dole_2692"/>
<dbReference type="eggNOG" id="COG0544">
    <property type="taxonomic scope" value="Bacteria"/>
</dbReference>
<dbReference type="HOGENOM" id="CLU_033058_2_0_7"/>
<dbReference type="OrthoDB" id="9767721at2"/>
<dbReference type="Proteomes" id="UP000008561">
    <property type="component" value="Chromosome"/>
</dbReference>
<dbReference type="GO" id="GO:0005737">
    <property type="term" value="C:cytoplasm"/>
    <property type="evidence" value="ECO:0007669"/>
    <property type="project" value="UniProtKB-SubCell"/>
</dbReference>
<dbReference type="GO" id="GO:0003755">
    <property type="term" value="F:peptidyl-prolyl cis-trans isomerase activity"/>
    <property type="evidence" value="ECO:0007669"/>
    <property type="project" value="UniProtKB-UniRule"/>
</dbReference>
<dbReference type="GO" id="GO:0044183">
    <property type="term" value="F:protein folding chaperone"/>
    <property type="evidence" value="ECO:0007669"/>
    <property type="project" value="TreeGrafter"/>
</dbReference>
<dbReference type="GO" id="GO:0043022">
    <property type="term" value="F:ribosome binding"/>
    <property type="evidence" value="ECO:0007669"/>
    <property type="project" value="TreeGrafter"/>
</dbReference>
<dbReference type="GO" id="GO:0051083">
    <property type="term" value="P:'de novo' cotranslational protein folding"/>
    <property type="evidence" value="ECO:0007669"/>
    <property type="project" value="TreeGrafter"/>
</dbReference>
<dbReference type="GO" id="GO:0051301">
    <property type="term" value="P:cell division"/>
    <property type="evidence" value="ECO:0007669"/>
    <property type="project" value="UniProtKB-KW"/>
</dbReference>
<dbReference type="GO" id="GO:0061077">
    <property type="term" value="P:chaperone-mediated protein folding"/>
    <property type="evidence" value="ECO:0007669"/>
    <property type="project" value="TreeGrafter"/>
</dbReference>
<dbReference type="GO" id="GO:0015031">
    <property type="term" value="P:protein transport"/>
    <property type="evidence" value="ECO:0007669"/>
    <property type="project" value="UniProtKB-UniRule"/>
</dbReference>
<dbReference type="GO" id="GO:0043335">
    <property type="term" value="P:protein unfolding"/>
    <property type="evidence" value="ECO:0007669"/>
    <property type="project" value="TreeGrafter"/>
</dbReference>
<dbReference type="Gene3D" id="3.10.50.40">
    <property type="match status" value="1"/>
</dbReference>
<dbReference type="Gene3D" id="3.30.70.1050">
    <property type="entry name" value="Trigger factor ribosome-binding domain"/>
    <property type="match status" value="1"/>
</dbReference>
<dbReference type="Gene3D" id="1.10.3120.10">
    <property type="entry name" value="Trigger factor, C-terminal domain"/>
    <property type="match status" value="1"/>
</dbReference>
<dbReference type="HAMAP" id="MF_00303">
    <property type="entry name" value="Trigger_factor_Tig"/>
    <property type="match status" value="1"/>
</dbReference>
<dbReference type="InterPro" id="IPR046357">
    <property type="entry name" value="PPIase_dom_sf"/>
</dbReference>
<dbReference type="InterPro" id="IPR001179">
    <property type="entry name" value="PPIase_FKBP_dom"/>
</dbReference>
<dbReference type="InterPro" id="IPR005215">
    <property type="entry name" value="Trig_fac"/>
</dbReference>
<dbReference type="InterPro" id="IPR008880">
    <property type="entry name" value="Trigger_fac_C"/>
</dbReference>
<dbReference type="InterPro" id="IPR037041">
    <property type="entry name" value="Trigger_fac_C_sf"/>
</dbReference>
<dbReference type="InterPro" id="IPR008881">
    <property type="entry name" value="Trigger_fac_ribosome-bd_bac"/>
</dbReference>
<dbReference type="InterPro" id="IPR036611">
    <property type="entry name" value="Trigger_fac_ribosome-bd_sf"/>
</dbReference>
<dbReference type="InterPro" id="IPR027304">
    <property type="entry name" value="Trigger_fact/SurA_dom_sf"/>
</dbReference>
<dbReference type="NCBIfam" id="TIGR00115">
    <property type="entry name" value="tig"/>
    <property type="match status" value="1"/>
</dbReference>
<dbReference type="PANTHER" id="PTHR30560">
    <property type="entry name" value="TRIGGER FACTOR CHAPERONE AND PEPTIDYL-PROLYL CIS/TRANS ISOMERASE"/>
    <property type="match status" value="1"/>
</dbReference>
<dbReference type="PANTHER" id="PTHR30560:SF3">
    <property type="entry name" value="TRIGGER FACTOR-LIKE PROTEIN TIG, CHLOROPLASTIC"/>
    <property type="match status" value="1"/>
</dbReference>
<dbReference type="Pfam" id="PF00254">
    <property type="entry name" value="FKBP_C"/>
    <property type="match status" value="1"/>
</dbReference>
<dbReference type="Pfam" id="PF05698">
    <property type="entry name" value="Trigger_C"/>
    <property type="match status" value="1"/>
</dbReference>
<dbReference type="Pfam" id="PF05697">
    <property type="entry name" value="Trigger_N"/>
    <property type="match status" value="1"/>
</dbReference>
<dbReference type="PIRSF" id="PIRSF003095">
    <property type="entry name" value="Trigger_factor"/>
    <property type="match status" value="1"/>
</dbReference>
<dbReference type="SUPFAM" id="SSF54534">
    <property type="entry name" value="FKBP-like"/>
    <property type="match status" value="1"/>
</dbReference>
<dbReference type="SUPFAM" id="SSF109998">
    <property type="entry name" value="Triger factor/SurA peptide-binding domain-like"/>
    <property type="match status" value="1"/>
</dbReference>
<dbReference type="SUPFAM" id="SSF102735">
    <property type="entry name" value="Trigger factor ribosome-binding domain"/>
    <property type="match status" value="1"/>
</dbReference>
<dbReference type="PROSITE" id="PS50059">
    <property type="entry name" value="FKBP_PPIASE"/>
    <property type="match status" value="1"/>
</dbReference>
<keyword id="KW-0131">Cell cycle</keyword>
<keyword id="KW-0132">Cell division</keyword>
<keyword id="KW-0143">Chaperone</keyword>
<keyword id="KW-0963">Cytoplasm</keyword>
<keyword id="KW-0413">Isomerase</keyword>
<keyword id="KW-1185">Reference proteome</keyword>
<keyword id="KW-0697">Rotamase</keyword>
<name>TIG_DESOH</name>
<comment type="function">
    <text evidence="1">Involved in protein export. Acts as a chaperone by maintaining the newly synthesized protein in an open conformation. Functions as a peptidyl-prolyl cis-trans isomerase.</text>
</comment>
<comment type="catalytic activity">
    <reaction evidence="1">
        <text>[protein]-peptidylproline (omega=180) = [protein]-peptidylproline (omega=0)</text>
        <dbReference type="Rhea" id="RHEA:16237"/>
        <dbReference type="Rhea" id="RHEA-COMP:10747"/>
        <dbReference type="Rhea" id="RHEA-COMP:10748"/>
        <dbReference type="ChEBI" id="CHEBI:83833"/>
        <dbReference type="ChEBI" id="CHEBI:83834"/>
        <dbReference type="EC" id="5.2.1.8"/>
    </reaction>
</comment>
<comment type="subcellular location">
    <subcellularLocation>
        <location>Cytoplasm</location>
    </subcellularLocation>
    <text evidence="1">About half TF is bound to the ribosome near the polypeptide exit tunnel while the other half is free in the cytoplasm.</text>
</comment>
<comment type="domain">
    <text evidence="1">Consists of 3 domains; the N-terminus binds the ribosome, the middle domain has PPIase activity, while the C-terminus has intrinsic chaperone activity on its own.</text>
</comment>
<comment type="similarity">
    <text evidence="1">Belongs to the FKBP-type PPIase family. Tig subfamily.</text>
</comment>
<gene>
    <name evidence="1" type="primary">tig</name>
    <name type="ordered locus">Dole_2692</name>
</gene>
<evidence type="ECO:0000255" key="1">
    <source>
        <dbReference type="HAMAP-Rule" id="MF_00303"/>
    </source>
</evidence>
<reference key="1">
    <citation type="submission" date="2007-10" db="EMBL/GenBank/DDBJ databases">
        <title>Complete sequence of Desulfococcus oleovorans Hxd3.</title>
        <authorList>
            <consortium name="US DOE Joint Genome Institute"/>
            <person name="Copeland A."/>
            <person name="Lucas S."/>
            <person name="Lapidus A."/>
            <person name="Barry K."/>
            <person name="Glavina del Rio T."/>
            <person name="Dalin E."/>
            <person name="Tice H."/>
            <person name="Pitluck S."/>
            <person name="Kiss H."/>
            <person name="Brettin T."/>
            <person name="Bruce D."/>
            <person name="Detter J.C."/>
            <person name="Han C."/>
            <person name="Schmutz J."/>
            <person name="Larimer F."/>
            <person name="Land M."/>
            <person name="Hauser L."/>
            <person name="Kyrpides N."/>
            <person name="Kim E."/>
            <person name="Wawrik B."/>
            <person name="Richardson P."/>
        </authorList>
    </citation>
    <scope>NUCLEOTIDE SEQUENCE [LARGE SCALE GENOMIC DNA]</scope>
    <source>
        <strain>DSM 6200 / JCM 39069 / Hxd3</strain>
    </source>
</reference>
<proteinExistence type="inferred from homology"/>
<accession>A8ZXB6</accession>